<gene>
    <name type="primary">qcrB</name>
    <name type="synonym">mla12A</name>
    <name type="ordered locus">ML0879</name>
</gene>
<reference key="1">
    <citation type="journal article" date="2001" name="Nature">
        <title>Massive gene decay in the leprosy bacillus.</title>
        <authorList>
            <person name="Cole S.T."/>
            <person name="Eiglmeier K."/>
            <person name="Parkhill J."/>
            <person name="James K.D."/>
            <person name="Thomson N.R."/>
            <person name="Wheeler P.R."/>
            <person name="Honore N."/>
            <person name="Garnier T."/>
            <person name="Churcher C.M."/>
            <person name="Harris D.E."/>
            <person name="Mungall K.L."/>
            <person name="Basham D."/>
            <person name="Brown D."/>
            <person name="Chillingworth T."/>
            <person name="Connor R."/>
            <person name="Davies R.M."/>
            <person name="Devlin K."/>
            <person name="Duthoy S."/>
            <person name="Feltwell T."/>
            <person name="Fraser A."/>
            <person name="Hamlin N."/>
            <person name="Holroyd S."/>
            <person name="Hornsby T."/>
            <person name="Jagels K."/>
            <person name="Lacroix C."/>
            <person name="Maclean J."/>
            <person name="Moule S."/>
            <person name="Murphy L.D."/>
            <person name="Oliver K."/>
            <person name="Quail M.A."/>
            <person name="Rajandream M.A."/>
            <person name="Rutherford K.M."/>
            <person name="Rutter S."/>
            <person name="Seeger K."/>
            <person name="Simon S."/>
            <person name="Simmonds M."/>
            <person name="Skelton J."/>
            <person name="Squares R."/>
            <person name="Squares S."/>
            <person name="Stevens K."/>
            <person name="Taylor K."/>
            <person name="Whitehead S."/>
            <person name="Woodward J.R."/>
            <person name="Barrell B.G."/>
        </authorList>
    </citation>
    <scope>NUCLEOTIDE SEQUENCE [LARGE SCALE GENOMIC DNA]</scope>
    <source>
        <strain>TN</strain>
    </source>
</reference>
<reference key="2">
    <citation type="journal article" date="1990" name="Nucleic Acids Res.">
        <title>Nucleotide and deduced amino acid sequence of a Mycobacterium leprae 12K protein.</title>
        <authorList>
            <person name="Hartskeerl R.A."/>
            <person name="Stabel L.F.E.M."/>
            <person name="Hermans C.R."/>
            <person name="Klatser P.R."/>
            <person name="Thole J.E.R."/>
        </authorList>
    </citation>
    <scope>NUCLEOTIDE SEQUENCE [GENOMIC DNA] OF 373-551</scope>
</reference>
<keyword id="KW-1003">Cell membrane</keyword>
<keyword id="KW-0249">Electron transport</keyword>
<keyword id="KW-0349">Heme</keyword>
<keyword id="KW-0408">Iron</keyword>
<keyword id="KW-0472">Membrane</keyword>
<keyword id="KW-0479">Metal-binding</keyword>
<keyword id="KW-1185">Reference proteome</keyword>
<keyword id="KW-0679">Respiratory chain</keyword>
<keyword id="KW-1278">Translocase</keyword>
<keyword id="KW-0812">Transmembrane</keyword>
<keyword id="KW-1133">Transmembrane helix</keyword>
<keyword id="KW-0813">Transport</keyword>
<dbReference type="EC" id="7.1.1.8" evidence="2"/>
<dbReference type="EMBL" id="AL583920">
    <property type="protein sequence ID" value="CAC31260.1"/>
    <property type="molecule type" value="Genomic_DNA"/>
</dbReference>
<dbReference type="EMBL" id="X51328">
    <property type="protein sequence ID" value="CAA35710.1"/>
    <property type="status" value="ALT_FRAME"/>
    <property type="molecule type" value="Genomic_DNA"/>
</dbReference>
<dbReference type="PIR" id="A87019">
    <property type="entry name" value="A87019"/>
</dbReference>
<dbReference type="PIR" id="S08427">
    <property type="entry name" value="S08427"/>
</dbReference>
<dbReference type="RefSeq" id="NP_301665.1">
    <property type="nucleotide sequence ID" value="NC_002677.1"/>
</dbReference>
<dbReference type="RefSeq" id="WP_010907989.1">
    <property type="nucleotide sequence ID" value="NC_002677.1"/>
</dbReference>
<dbReference type="SMR" id="P15878"/>
<dbReference type="STRING" id="272631.gene:17574705"/>
<dbReference type="KEGG" id="mle:ML0879"/>
<dbReference type="PATRIC" id="fig|272631.5.peg.1610"/>
<dbReference type="Leproma" id="ML0879"/>
<dbReference type="eggNOG" id="COG1290">
    <property type="taxonomic scope" value="Bacteria"/>
</dbReference>
<dbReference type="HOGENOM" id="CLU_031114_2_0_11"/>
<dbReference type="OrthoDB" id="9804503at2"/>
<dbReference type="Proteomes" id="UP000000806">
    <property type="component" value="Chromosome"/>
</dbReference>
<dbReference type="GO" id="GO:0005886">
    <property type="term" value="C:plasma membrane"/>
    <property type="evidence" value="ECO:0007669"/>
    <property type="project" value="UniProtKB-SubCell"/>
</dbReference>
<dbReference type="GO" id="GO:0046872">
    <property type="term" value="F:metal ion binding"/>
    <property type="evidence" value="ECO:0007669"/>
    <property type="project" value="UniProtKB-KW"/>
</dbReference>
<dbReference type="GO" id="GO:0008121">
    <property type="term" value="F:ubiquinol-cytochrome-c reductase activity"/>
    <property type="evidence" value="ECO:0007669"/>
    <property type="project" value="UniProtKB-EC"/>
</dbReference>
<dbReference type="GO" id="GO:0022904">
    <property type="term" value="P:respiratory electron transport chain"/>
    <property type="evidence" value="ECO:0007669"/>
    <property type="project" value="InterPro"/>
</dbReference>
<dbReference type="FunFam" id="1.20.810.10:FF:000007">
    <property type="entry name" value="Ubiquinol-cytochrome C reductase B subunit"/>
    <property type="match status" value="1"/>
</dbReference>
<dbReference type="Gene3D" id="1.20.810.10">
    <property type="entry name" value="Cytochrome Bc1 Complex, Chain C"/>
    <property type="match status" value="1"/>
</dbReference>
<dbReference type="InterPro" id="IPR005797">
    <property type="entry name" value="Cyt_b/b6_N"/>
</dbReference>
<dbReference type="InterPro" id="IPR027387">
    <property type="entry name" value="Cytb/b6-like_sf"/>
</dbReference>
<dbReference type="InterPro" id="IPR016174">
    <property type="entry name" value="Di-haem_cyt_TM"/>
</dbReference>
<dbReference type="PANTHER" id="PTHR19271">
    <property type="entry name" value="CYTOCHROME B"/>
    <property type="match status" value="1"/>
</dbReference>
<dbReference type="PANTHER" id="PTHR19271:SF16">
    <property type="entry name" value="CYTOCHROME B"/>
    <property type="match status" value="1"/>
</dbReference>
<dbReference type="Pfam" id="PF13631">
    <property type="entry name" value="Cytochrom_B_N_2"/>
    <property type="match status" value="1"/>
</dbReference>
<dbReference type="SUPFAM" id="SSF81342">
    <property type="entry name" value="Transmembrane di-heme cytochromes"/>
    <property type="match status" value="1"/>
</dbReference>
<dbReference type="PROSITE" id="PS51002">
    <property type="entry name" value="CYTB_NTER"/>
    <property type="match status" value="1"/>
</dbReference>
<sequence>MSPKSVPDIGDVLARQAEDIDTRYHPSAALRRQLNKVFPTHWSFLLGEIALYSFIVLLLTGVYLTLFFDPSMTDVTYNGVYQPLRGVEMSRAYQSTLDISFEVRGGLFVRQIHHWAALMFTAAIMVHLARIFFTGAFRRPRETNWVIGSLLLILAMFEGYFGYSMPDDLLSGIGLRAALSSITLGIPVIGTWLHWALFGGDFPGTILIPRLYALHILLIPGVILALIGLHLALVWFQKHTQFPGPGRTEYNVVGVRVMPVFAFKSGAFFAAIVGVLGLMGGFLQINPIWNLGPYKPSQVSAGSQPDFYMMWTEGLARIWPAWEFYFWHHTIPAPVWVAVIMALVFVLLITYPFLEKRFTGDYAHHNLLQRPRDVPVRTSIGAMAITFYMVLTLAAMNDIIALKFHISLNATTWIGRIGMVILPLLVYFITYRWCIGLQRSDRAVLEHGIETGIIKRLPHGAYIELHQPLGPVDDHGHPIPLEYQGTAVPKRMNKLGSAGSPSSGSFLFADPVSEDAALREATHVAEQRALTALREHQDSIASSPNGERGKH</sequence>
<evidence type="ECO:0000250" key="1">
    <source>
        <dbReference type="UniProtKB" id="P00163"/>
    </source>
</evidence>
<evidence type="ECO:0000250" key="2">
    <source>
        <dbReference type="UniProtKB" id="P9WP37"/>
    </source>
</evidence>
<evidence type="ECO:0000255" key="3"/>
<evidence type="ECO:0000255" key="4">
    <source>
        <dbReference type="PROSITE-ProRule" id="PRU00968"/>
    </source>
</evidence>
<evidence type="ECO:0000256" key="5">
    <source>
        <dbReference type="SAM" id="MobiDB-lite"/>
    </source>
</evidence>
<evidence type="ECO:0000305" key="6"/>
<accession>P15878</accession>
<proteinExistence type="inferred from homology"/>
<protein>
    <recommendedName>
        <fullName>Cytochrome bc1 complex cytochrome b subunit</fullName>
        <ecNumber evidence="2">7.1.1.8</ecNumber>
    </recommendedName>
    <alternativeName>
        <fullName>Cytochrome bc1 reductase complex subunit QcrB</fullName>
    </alternativeName>
    <alternativeName>
        <fullName>Ubiquinol--cytochrome c reductase cytochrome b subunit</fullName>
    </alternativeName>
</protein>
<comment type="function">
    <text evidence="2">Cytochrome b subunit of the cytochrome bc1 complex, an essential component of the respiratory electron transport chain required for ATP synthesis. The bc1 complex catalyzes the oxidation of ubiquinol and the reduction of cytochrome c in the respiratory chain. The bc1 complex operates through a Q-cycle mechanism that couples electron transfer to generation of the proton gradient that drives ATP synthesis. The cytochrome b subunit contains two ubiquinol reactive sites: the oxidation (QP) site and the reduction (QN) site.</text>
</comment>
<comment type="catalytic activity">
    <reaction evidence="2">
        <text>a quinol + 2 Fe(III)-[cytochrome c](out) = a quinone + 2 Fe(II)-[cytochrome c](out) + 2 H(+)(out)</text>
        <dbReference type="Rhea" id="RHEA:11484"/>
        <dbReference type="Rhea" id="RHEA-COMP:10350"/>
        <dbReference type="Rhea" id="RHEA-COMP:14399"/>
        <dbReference type="ChEBI" id="CHEBI:15378"/>
        <dbReference type="ChEBI" id="CHEBI:24646"/>
        <dbReference type="ChEBI" id="CHEBI:29033"/>
        <dbReference type="ChEBI" id="CHEBI:29034"/>
        <dbReference type="ChEBI" id="CHEBI:132124"/>
        <dbReference type="EC" id="7.1.1.8"/>
    </reaction>
</comment>
<comment type="cofactor">
    <cofactor evidence="1">
        <name>heme</name>
        <dbReference type="ChEBI" id="CHEBI:30413"/>
    </cofactor>
    <text evidence="1">Binds 2 heme groups non-covalently per subunit.</text>
</comment>
<comment type="subunit">
    <text evidence="2">The cytochrome bc1 complex is composed of a cytochrome b (QcrB), the Rieske iron-sulfur protein (QcrA) and a diheme cytochrome c (QcrC) subunit.</text>
</comment>
<comment type="subcellular location">
    <subcellularLocation>
        <location evidence="3">Cell membrane</location>
        <topology evidence="3">Multi-pass membrane protein</topology>
    </subcellularLocation>
</comment>
<comment type="similarity">
    <text evidence="4">Belongs to the cytochrome b family.</text>
</comment>
<comment type="sequence caution" evidence="6">
    <conflict type="frameshift">
        <sequence resource="EMBL-CDS" id="CAA35710"/>
    </conflict>
</comment>
<organism>
    <name type="scientific">Mycobacterium leprae (strain TN)</name>
    <dbReference type="NCBI Taxonomy" id="272631"/>
    <lineage>
        <taxon>Bacteria</taxon>
        <taxon>Bacillati</taxon>
        <taxon>Actinomycetota</taxon>
        <taxon>Actinomycetes</taxon>
        <taxon>Mycobacteriales</taxon>
        <taxon>Mycobacteriaceae</taxon>
        <taxon>Mycobacterium</taxon>
    </lineage>
</organism>
<name>QCRB_MYCLE</name>
<feature type="chain" id="PRO_0000061926" description="Cytochrome bc1 complex cytochrome b subunit">
    <location>
        <begin position="1"/>
        <end position="551"/>
    </location>
</feature>
<feature type="transmembrane region" description="Helical" evidence="4">
    <location>
        <begin position="44"/>
        <end position="64"/>
    </location>
</feature>
<feature type="transmembrane region" description="Helical" evidence="4">
    <location>
        <begin position="117"/>
        <end position="137"/>
    </location>
</feature>
<feature type="transmembrane region" description="Helical" evidence="4">
    <location>
        <begin position="145"/>
        <end position="165"/>
    </location>
</feature>
<feature type="transmembrane region" description="Helical" evidence="4">
    <location>
        <begin position="188"/>
        <end position="208"/>
    </location>
</feature>
<feature type="transmembrane region" description="Helical" evidence="4">
    <location>
        <begin position="216"/>
        <end position="236"/>
    </location>
</feature>
<feature type="transmembrane region" description="Helical" evidence="4">
    <location>
        <begin position="265"/>
        <end position="285"/>
    </location>
</feature>
<feature type="transmembrane region" description="Helical" evidence="4">
    <location>
        <begin position="334"/>
        <end position="354"/>
    </location>
</feature>
<feature type="transmembrane region" description="Helical" evidence="4">
    <location>
        <begin position="380"/>
        <end position="400"/>
    </location>
</feature>
<feature type="transmembrane region" description="Helical" evidence="4">
    <location>
        <begin position="417"/>
        <end position="437"/>
    </location>
</feature>
<feature type="region of interest" description="Disordered" evidence="5">
    <location>
        <begin position="532"/>
        <end position="551"/>
    </location>
</feature>
<feature type="binding site" description="axial binding residue" evidence="4">
    <location>
        <position position="113"/>
    </location>
    <ligand>
        <name>heme</name>
        <dbReference type="ChEBI" id="CHEBI:30413"/>
        <label>1</label>
    </ligand>
    <ligandPart>
        <name>Fe</name>
        <dbReference type="ChEBI" id="CHEBI:18248"/>
    </ligandPart>
</feature>
<feature type="binding site" description="axial binding residue" evidence="4">
    <location>
        <position position="127"/>
    </location>
    <ligand>
        <name>heme</name>
        <dbReference type="ChEBI" id="CHEBI:30413"/>
        <label>2</label>
    </ligand>
    <ligandPart>
        <name>Fe</name>
        <dbReference type="ChEBI" id="CHEBI:18248"/>
    </ligandPart>
</feature>
<feature type="binding site" description="axial binding residue" evidence="4">
    <location>
        <position position="215"/>
    </location>
    <ligand>
        <name>heme</name>
        <dbReference type="ChEBI" id="CHEBI:30413"/>
        <label>1</label>
    </ligand>
    <ligandPart>
        <name>Fe</name>
        <dbReference type="ChEBI" id="CHEBI:18248"/>
    </ligandPart>
</feature>
<feature type="binding site" description="axial binding residue" evidence="4">
    <location>
        <position position="230"/>
    </location>
    <ligand>
        <name>heme</name>
        <dbReference type="ChEBI" id="CHEBI:30413"/>
        <label>2</label>
    </ligand>
    <ligandPart>
        <name>Fe</name>
        <dbReference type="ChEBI" id="CHEBI:18248"/>
    </ligandPart>
</feature>